<reference key="1">
    <citation type="submission" date="2006-10" db="EMBL/GenBank/DDBJ databases">
        <title>Complete sequence of chromosome of Pelobacter propionicus DSM 2379.</title>
        <authorList>
            <consortium name="US DOE Joint Genome Institute"/>
            <person name="Copeland A."/>
            <person name="Lucas S."/>
            <person name="Lapidus A."/>
            <person name="Barry K."/>
            <person name="Detter J.C."/>
            <person name="Glavina del Rio T."/>
            <person name="Hammon N."/>
            <person name="Israni S."/>
            <person name="Dalin E."/>
            <person name="Tice H."/>
            <person name="Pitluck S."/>
            <person name="Saunders E."/>
            <person name="Brettin T."/>
            <person name="Bruce D."/>
            <person name="Han C."/>
            <person name="Tapia R."/>
            <person name="Schmutz J."/>
            <person name="Larimer F."/>
            <person name="Land M."/>
            <person name="Hauser L."/>
            <person name="Kyrpides N."/>
            <person name="Kim E."/>
            <person name="Lovley D."/>
            <person name="Richardson P."/>
        </authorList>
    </citation>
    <scope>NUCLEOTIDE SEQUENCE [LARGE SCALE GENOMIC DNA]</scope>
    <source>
        <strain>DSM 2379 / NBRC 103807 / OttBd1</strain>
    </source>
</reference>
<sequence length="527" mass="59589">MQNHNRQEVDKRRTFAIISHPDAGKTTITEKLLLFGGAIQQAGEVRARKSARHATSDWMELEKQRGISVTSSVMKFTYNGCEINLLDTPGHNDFSEDTYRVLTAVDSVLMVIDSVKGVESQTKKLLEVCRLRHTPIITFMNKLDREGQEPLDLLDDIEKNLKMQTAPVTWPVGMGKRFRGTYHLYTKELIFFDAEAANGTGRILTIAGLNDPLLDELLGSQVDELRHDVELLEGAANPFDKEAYLAGQQTPVFFGSAINTFGVQQLLDAFIEYAPAPLPRETTTRVVSPYEEPFSGFTFKIQANMDPAHRDRIAFFRICSGKFTRGMKVRHTRLGREVQIANATIFMAQDRTNVEEAWPGDIIGIHNHGTIKIGDTFTQGEELKFTGIPSFAPEHFRKVRLLNPLKSKALEKGLIQLAEEGATQVFKPLMGADWVIGAVGLLQFEVVMHRLEFEYSVKVAFEPVSYVTARWVTGERKKVEEFEKREAMHVYIDGEGKLTYMAGSQWRLDNTIESWKELSFHETSEHS</sequence>
<comment type="function">
    <text evidence="1">Increases the formation of ribosomal termination complexes and stimulates activities of RF-1 and RF-2. It binds guanine nucleotides and has strong preference for UGA stop codons. It may interact directly with the ribosome. The stimulation of RF-1 and RF-2 is significantly reduced by GTP and GDP, but not by GMP.</text>
</comment>
<comment type="subcellular location">
    <subcellularLocation>
        <location evidence="1">Cytoplasm</location>
    </subcellularLocation>
</comment>
<comment type="similarity">
    <text evidence="1">Belongs to the TRAFAC class translation factor GTPase superfamily. Classic translation factor GTPase family. PrfC subfamily.</text>
</comment>
<dbReference type="EMBL" id="CP000482">
    <property type="protein sequence ID" value="ABK98511.1"/>
    <property type="molecule type" value="Genomic_DNA"/>
</dbReference>
<dbReference type="RefSeq" id="WP_011734821.1">
    <property type="nucleotide sequence ID" value="NC_008609.1"/>
</dbReference>
<dbReference type="SMR" id="A1AME1"/>
<dbReference type="STRING" id="338966.Ppro_0882"/>
<dbReference type="KEGG" id="ppd:Ppro_0882"/>
<dbReference type="eggNOG" id="COG4108">
    <property type="taxonomic scope" value="Bacteria"/>
</dbReference>
<dbReference type="HOGENOM" id="CLU_002794_2_1_7"/>
<dbReference type="OrthoDB" id="9801591at2"/>
<dbReference type="Proteomes" id="UP000006732">
    <property type="component" value="Chromosome"/>
</dbReference>
<dbReference type="GO" id="GO:0005829">
    <property type="term" value="C:cytosol"/>
    <property type="evidence" value="ECO:0007669"/>
    <property type="project" value="TreeGrafter"/>
</dbReference>
<dbReference type="GO" id="GO:0005525">
    <property type="term" value="F:GTP binding"/>
    <property type="evidence" value="ECO:0007669"/>
    <property type="project" value="UniProtKB-UniRule"/>
</dbReference>
<dbReference type="GO" id="GO:0003924">
    <property type="term" value="F:GTPase activity"/>
    <property type="evidence" value="ECO:0007669"/>
    <property type="project" value="InterPro"/>
</dbReference>
<dbReference type="GO" id="GO:0016150">
    <property type="term" value="F:translation release factor activity, codon nonspecific"/>
    <property type="evidence" value="ECO:0007669"/>
    <property type="project" value="TreeGrafter"/>
</dbReference>
<dbReference type="GO" id="GO:0016149">
    <property type="term" value="F:translation release factor activity, codon specific"/>
    <property type="evidence" value="ECO:0007669"/>
    <property type="project" value="UniProtKB-UniRule"/>
</dbReference>
<dbReference type="GO" id="GO:0006449">
    <property type="term" value="P:regulation of translational termination"/>
    <property type="evidence" value="ECO:0007669"/>
    <property type="project" value="UniProtKB-UniRule"/>
</dbReference>
<dbReference type="CDD" id="cd04169">
    <property type="entry name" value="RF3"/>
    <property type="match status" value="1"/>
</dbReference>
<dbReference type="CDD" id="cd03689">
    <property type="entry name" value="RF3_II"/>
    <property type="match status" value="1"/>
</dbReference>
<dbReference type="CDD" id="cd16259">
    <property type="entry name" value="RF3_III"/>
    <property type="match status" value="1"/>
</dbReference>
<dbReference type="FunFam" id="2.40.30.10:FF:000040">
    <property type="entry name" value="Peptide chain release factor 3"/>
    <property type="match status" value="1"/>
</dbReference>
<dbReference type="FunFam" id="3.30.70.3280:FF:000001">
    <property type="entry name" value="Peptide chain release factor 3"/>
    <property type="match status" value="1"/>
</dbReference>
<dbReference type="FunFam" id="3.40.50.300:FF:000542">
    <property type="entry name" value="Peptide chain release factor 3"/>
    <property type="match status" value="1"/>
</dbReference>
<dbReference type="Gene3D" id="3.40.50.300">
    <property type="entry name" value="P-loop containing nucleotide triphosphate hydrolases"/>
    <property type="match status" value="1"/>
</dbReference>
<dbReference type="Gene3D" id="3.30.70.3280">
    <property type="entry name" value="Peptide chain release factor 3, domain III"/>
    <property type="match status" value="1"/>
</dbReference>
<dbReference type="Gene3D" id="2.40.30.10">
    <property type="entry name" value="Translation factors"/>
    <property type="match status" value="1"/>
</dbReference>
<dbReference type="HAMAP" id="MF_00072">
    <property type="entry name" value="Rel_fac_3"/>
    <property type="match status" value="1"/>
</dbReference>
<dbReference type="InterPro" id="IPR053905">
    <property type="entry name" value="EF-G-like_DII"/>
</dbReference>
<dbReference type="InterPro" id="IPR035647">
    <property type="entry name" value="EFG_III/V"/>
</dbReference>
<dbReference type="InterPro" id="IPR031157">
    <property type="entry name" value="G_TR_CS"/>
</dbReference>
<dbReference type="InterPro" id="IPR027417">
    <property type="entry name" value="P-loop_NTPase"/>
</dbReference>
<dbReference type="InterPro" id="IPR004548">
    <property type="entry name" value="PrfC"/>
</dbReference>
<dbReference type="InterPro" id="IPR032090">
    <property type="entry name" value="RF3_C"/>
</dbReference>
<dbReference type="InterPro" id="IPR038467">
    <property type="entry name" value="RF3_dom_3_sf"/>
</dbReference>
<dbReference type="InterPro" id="IPR041732">
    <property type="entry name" value="RF3_GTP-bd"/>
</dbReference>
<dbReference type="InterPro" id="IPR005225">
    <property type="entry name" value="Small_GTP-bd"/>
</dbReference>
<dbReference type="InterPro" id="IPR000795">
    <property type="entry name" value="T_Tr_GTP-bd_dom"/>
</dbReference>
<dbReference type="InterPro" id="IPR009000">
    <property type="entry name" value="Transl_B-barrel_sf"/>
</dbReference>
<dbReference type="NCBIfam" id="TIGR00503">
    <property type="entry name" value="prfC"/>
    <property type="match status" value="1"/>
</dbReference>
<dbReference type="NCBIfam" id="NF001964">
    <property type="entry name" value="PRK00741.1"/>
    <property type="match status" value="1"/>
</dbReference>
<dbReference type="NCBIfam" id="TIGR00231">
    <property type="entry name" value="small_GTP"/>
    <property type="match status" value="1"/>
</dbReference>
<dbReference type="PANTHER" id="PTHR43556">
    <property type="entry name" value="PEPTIDE CHAIN RELEASE FACTOR RF3"/>
    <property type="match status" value="1"/>
</dbReference>
<dbReference type="PANTHER" id="PTHR43556:SF2">
    <property type="entry name" value="PEPTIDE CHAIN RELEASE FACTOR RF3"/>
    <property type="match status" value="1"/>
</dbReference>
<dbReference type="Pfam" id="PF22042">
    <property type="entry name" value="EF-G_D2"/>
    <property type="match status" value="1"/>
</dbReference>
<dbReference type="Pfam" id="PF00009">
    <property type="entry name" value="GTP_EFTU"/>
    <property type="match status" value="1"/>
</dbReference>
<dbReference type="Pfam" id="PF16658">
    <property type="entry name" value="RF3_C"/>
    <property type="match status" value="1"/>
</dbReference>
<dbReference type="PRINTS" id="PR00315">
    <property type="entry name" value="ELONGATNFCT"/>
</dbReference>
<dbReference type="SUPFAM" id="SSF54980">
    <property type="entry name" value="EF-G C-terminal domain-like"/>
    <property type="match status" value="1"/>
</dbReference>
<dbReference type="SUPFAM" id="SSF52540">
    <property type="entry name" value="P-loop containing nucleoside triphosphate hydrolases"/>
    <property type="match status" value="1"/>
</dbReference>
<dbReference type="SUPFAM" id="SSF50447">
    <property type="entry name" value="Translation proteins"/>
    <property type="match status" value="1"/>
</dbReference>
<dbReference type="PROSITE" id="PS00301">
    <property type="entry name" value="G_TR_1"/>
    <property type="match status" value="1"/>
</dbReference>
<dbReference type="PROSITE" id="PS51722">
    <property type="entry name" value="G_TR_2"/>
    <property type="match status" value="1"/>
</dbReference>
<gene>
    <name evidence="1" type="primary">prfC</name>
    <name type="ordered locus">Ppro_0882</name>
</gene>
<feature type="chain" id="PRO_1000023665" description="Peptide chain release factor 3">
    <location>
        <begin position="1"/>
        <end position="527"/>
    </location>
</feature>
<feature type="domain" description="tr-type G">
    <location>
        <begin position="10"/>
        <end position="278"/>
    </location>
</feature>
<feature type="binding site" evidence="1">
    <location>
        <begin position="19"/>
        <end position="26"/>
    </location>
    <ligand>
        <name>GTP</name>
        <dbReference type="ChEBI" id="CHEBI:37565"/>
    </ligand>
</feature>
<feature type="binding site" evidence="1">
    <location>
        <begin position="87"/>
        <end position="91"/>
    </location>
    <ligand>
        <name>GTP</name>
        <dbReference type="ChEBI" id="CHEBI:37565"/>
    </ligand>
</feature>
<feature type="binding site" evidence="1">
    <location>
        <begin position="141"/>
        <end position="144"/>
    </location>
    <ligand>
        <name>GTP</name>
        <dbReference type="ChEBI" id="CHEBI:37565"/>
    </ligand>
</feature>
<protein>
    <recommendedName>
        <fullName evidence="1">Peptide chain release factor 3</fullName>
        <shortName evidence="1">RF-3</shortName>
    </recommendedName>
</protein>
<accession>A1AME1</accession>
<evidence type="ECO:0000255" key="1">
    <source>
        <dbReference type="HAMAP-Rule" id="MF_00072"/>
    </source>
</evidence>
<name>RF3_PELPD</name>
<organism>
    <name type="scientific">Pelobacter propionicus (strain DSM 2379 / NBRC 103807 / OttBd1)</name>
    <dbReference type="NCBI Taxonomy" id="338966"/>
    <lineage>
        <taxon>Bacteria</taxon>
        <taxon>Pseudomonadati</taxon>
        <taxon>Thermodesulfobacteriota</taxon>
        <taxon>Desulfuromonadia</taxon>
        <taxon>Desulfuromonadales</taxon>
        <taxon>Desulfuromonadaceae</taxon>
        <taxon>Pelobacter</taxon>
    </lineage>
</organism>
<proteinExistence type="inferred from homology"/>
<keyword id="KW-0963">Cytoplasm</keyword>
<keyword id="KW-0342">GTP-binding</keyword>
<keyword id="KW-0547">Nucleotide-binding</keyword>
<keyword id="KW-0648">Protein biosynthesis</keyword>
<keyword id="KW-1185">Reference proteome</keyword>